<sequence>MNLNLSLEEVRKLSENYNVIPLYTELLVDTETPLSIFLKLKEKGQFNILLESAEGGEKWGRYSFIITGSSFYLRTRKDIGEIYERGKVNFFETKDPLSKIKEVVKKFIPYHDERLPRFWGGLVGYFAYDVVKFYEPVEDKNPDPIHTYDIYLVLTDVVVIHDNLTGKIKVVVPIFAQNGIEEEYERAKNLIRDTVKKLKERGTTFLNVVEKEPDFKNWRSNFTKEEFEDIVKKAKEYIAQGDVIQVVLSQRFRKRFKGNPDNIYRVLRFLNPSPYMYYLDFDQLKVIGSSPEILVRLEEGRIETRPIAGTRKRGRTEEEDKRLEEDLLSDEKERAEHLMLVDLARNDIGRVAKTGSVRVENFMRIERYSHVMHIVSDVVGELREGYDALDVLKATFPAGTVSGAPKVRAMQIIEELENERRGIYAGSVGYISFQGNMDMAIAIRTAVYRDRDIFVQAGAGIVADSVPEKEWEETVNKAKALMKAIEIAEESQEE</sequence>
<protein>
    <recommendedName>
        <fullName>Anthranilate synthase component 1</fullName>
        <shortName>AS</shortName>
        <shortName>ASI</shortName>
        <ecNumber>4.1.3.27</ecNumber>
    </recommendedName>
</protein>
<reference key="1">
    <citation type="journal article" date="1998" name="Nature">
        <title>The complete genome of the hyperthermophilic bacterium Aquifex aeolicus.</title>
        <authorList>
            <person name="Deckert G."/>
            <person name="Warren P.V."/>
            <person name="Gaasterland T."/>
            <person name="Young W.G."/>
            <person name="Lenox A.L."/>
            <person name="Graham D.E."/>
            <person name="Overbeek R."/>
            <person name="Snead M.A."/>
            <person name="Keller M."/>
            <person name="Aujay M."/>
            <person name="Huber R."/>
            <person name="Feldman R.A."/>
            <person name="Short J.M."/>
            <person name="Olsen G.J."/>
            <person name="Swanson R.V."/>
        </authorList>
    </citation>
    <scope>NUCLEOTIDE SEQUENCE [LARGE SCALE GENOMIC DNA]</scope>
    <source>
        <strain>VF5</strain>
    </source>
</reference>
<evidence type="ECO:0000250" key="1"/>
<evidence type="ECO:0000250" key="2">
    <source>
        <dbReference type="UniProtKB" id="P00897"/>
    </source>
</evidence>
<evidence type="ECO:0000305" key="3"/>
<gene>
    <name type="primary">trpE</name>
    <name type="ordered locus">aq_582</name>
</gene>
<accession>O66849</accession>
<keyword id="KW-0028">Amino-acid biosynthesis</keyword>
<keyword id="KW-0057">Aromatic amino acid biosynthesis</keyword>
<keyword id="KW-0456">Lyase</keyword>
<keyword id="KW-0460">Magnesium</keyword>
<keyword id="KW-0479">Metal-binding</keyword>
<keyword id="KW-1185">Reference proteome</keyword>
<keyword id="KW-0822">Tryptophan biosynthesis</keyword>
<proteinExistence type="inferred from homology"/>
<dbReference type="EC" id="4.1.3.27"/>
<dbReference type="EMBL" id="AE000657">
    <property type="protein sequence ID" value="AAC06796.1"/>
    <property type="molecule type" value="Genomic_DNA"/>
</dbReference>
<dbReference type="PIR" id="E70352">
    <property type="entry name" value="E70352"/>
</dbReference>
<dbReference type="RefSeq" id="NP_213409.1">
    <property type="nucleotide sequence ID" value="NC_000918.1"/>
</dbReference>
<dbReference type="RefSeq" id="WP_010880347.1">
    <property type="nucleotide sequence ID" value="NC_000918.1"/>
</dbReference>
<dbReference type="SMR" id="O66849"/>
<dbReference type="FunCoup" id="O66849">
    <property type="interactions" value="291"/>
</dbReference>
<dbReference type="STRING" id="224324.aq_582"/>
<dbReference type="EnsemblBacteria" id="AAC06796">
    <property type="protein sequence ID" value="AAC06796"/>
    <property type="gene ID" value="aq_582"/>
</dbReference>
<dbReference type="KEGG" id="aae:aq_582"/>
<dbReference type="PATRIC" id="fig|224324.8.peg.476"/>
<dbReference type="eggNOG" id="COG0147">
    <property type="taxonomic scope" value="Bacteria"/>
</dbReference>
<dbReference type="HOGENOM" id="CLU_006493_9_3_0"/>
<dbReference type="InParanoid" id="O66849"/>
<dbReference type="OrthoDB" id="9803598at2"/>
<dbReference type="UniPathway" id="UPA00035">
    <property type="reaction ID" value="UER00040"/>
</dbReference>
<dbReference type="Proteomes" id="UP000000798">
    <property type="component" value="Chromosome"/>
</dbReference>
<dbReference type="GO" id="GO:0004049">
    <property type="term" value="F:anthranilate synthase activity"/>
    <property type="evidence" value="ECO:0007669"/>
    <property type="project" value="UniProtKB-EC"/>
</dbReference>
<dbReference type="GO" id="GO:0046872">
    <property type="term" value="F:metal ion binding"/>
    <property type="evidence" value="ECO:0007669"/>
    <property type="project" value="UniProtKB-KW"/>
</dbReference>
<dbReference type="GO" id="GO:0000162">
    <property type="term" value="P:L-tryptophan biosynthetic process"/>
    <property type="evidence" value="ECO:0000318"/>
    <property type="project" value="GO_Central"/>
</dbReference>
<dbReference type="Gene3D" id="3.60.120.10">
    <property type="entry name" value="Anthranilate synthase"/>
    <property type="match status" value="1"/>
</dbReference>
<dbReference type="InterPro" id="IPR005801">
    <property type="entry name" value="ADC_synthase"/>
</dbReference>
<dbReference type="InterPro" id="IPR019999">
    <property type="entry name" value="Anth_synth_I-like"/>
</dbReference>
<dbReference type="InterPro" id="IPR006805">
    <property type="entry name" value="Anth_synth_I_N"/>
</dbReference>
<dbReference type="InterPro" id="IPR005256">
    <property type="entry name" value="Anth_synth_I_PabB"/>
</dbReference>
<dbReference type="InterPro" id="IPR015890">
    <property type="entry name" value="Chorismate_C"/>
</dbReference>
<dbReference type="NCBIfam" id="TIGR00564">
    <property type="entry name" value="trpE_most"/>
    <property type="match status" value="1"/>
</dbReference>
<dbReference type="PANTHER" id="PTHR11236">
    <property type="entry name" value="AMINOBENZOATE/ANTHRANILATE SYNTHASE"/>
    <property type="match status" value="1"/>
</dbReference>
<dbReference type="PANTHER" id="PTHR11236:SF48">
    <property type="entry name" value="ISOCHORISMATE SYNTHASE MENF"/>
    <property type="match status" value="1"/>
</dbReference>
<dbReference type="Pfam" id="PF04715">
    <property type="entry name" value="Anth_synt_I_N"/>
    <property type="match status" value="1"/>
</dbReference>
<dbReference type="Pfam" id="PF00425">
    <property type="entry name" value="Chorismate_bind"/>
    <property type="match status" value="1"/>
</dbReference>
<dbReference type="PRINTS" id="PR00095">
    <property type="entry name" value="ANTSNTHASEI"/>
</dbReference>
<dbReference type="SUPFAM" id="SSF56322">
    <property type="entry name" value="ADC synthase"/>
    <property type="match status" value="1"/>
</dbReference>
<feature type="chain" id="PRO_0000154074" description="Anthranilate synthase component 1">
    <location>
        <begin position="1"/>
        <end position="494"/>
    </location>
</feature>
<feature type="binding site" evidence="2">
    <location>
        <position position="52"/>
    </location>
    <ligand>
        <name>L-tryptophan</name>
        <dbReference type="ChEBI" id="CHEBI:57912"/>
    </ligand>
</feature>
<feature type="binding site" evidence="2">
    <location>
        <begin position="274"/>
        <end position="276"/>
    </location>
    <ligand>
        <name>L-tryptophan</name>
        <dbReference type="ChEBI" id="CHEBI:57912"/>
    </ligand>
</feature>
<feature type="binding site" evidence="2">
    <location>
        <begin position="309"/>
        <end position="310"/>
    </location>
    <ligand>
        <name>chorismate</name>
        <dbReference type="ChEBI" id="CHEBI:29748"/>
    </ligand>
</feature>
<feature type="binding site" evidence="2">
    <location>
        <position position="336"/>
    </location>
    <ligand>
        <name>Mg(2+)</name>
        <dbReference type="ChEBI" id="CHEBI:18420"/>
    </ligand>
</feature>
<feature type="binding site" evidence="2">
    <location>
        <position position="424"/>
    </location>
    <ligand>
        <name>chorismate</name>
        <dbReference type="ChEBI" id="CHEBI:29748"/>
    </ligand>
</feature>
<feature type="binding site" evidence="2">
    <location>
        <position position="444"/>
    </location>
    <ligand>
        <name>chorismate</name>
        <dbReference type="ChEBI" id="CHEBI:29748"/>
    </ligand>
</feature>
<feature type="binding site" evidence="2">
    <location>
        <begin position="458"/>
        <end position="460"/>
    </location>
    <ligand>
        <name>chorismate</name>
        <dbReference type="ChEBI" id="CHEBI:29748"/>
    </ligand>
</feature>
<feature type="binding site" evidence="2">
    <location>
        <position position="460"/>
    </location>
    <ligand>
        <name>chorismate</name>
        <dbReference type="ChEBI" id="CHEBI:29748"/>
    </ligand>
</feature>
<feature type="binding site" evidence="2">
    <location>
        <position position="473"/>
    </location>
    <ligand>
        <name>Mg(2+)</name>
        <dbReference type="ChEBI" id="CHEBI:18420"/>
    </ligand>
</feature>
<name>TRPE_AQUAE</name>
<organism>
    <name type="scientific">Aquifex aeolicus (strain VF5)</name>
    <dbReference type="NCBI Taxonomy" id="224324"/>
    <lineage>
        <taxon>Bacteria</taxon>
        <taxon>Pseudomonadati</taxon>
        <taxon>Aquificota</taxon>
        <taxon>Aquificia</taxon>
        <taxon>Aquificales</taxon>
        <taxon>Aquificaceae</taxon>
        <taxon>Aquifex</taxon>
    </lineage>
</organism>
<comment type="function">
    <text evidence="1">Part of a heterotetrameric complex that catalyzes the two-step biosynthesis of anthranilate, an intermediate in the biosynthesis of L-tryptophan. In the first step, the glutamine-binding beta subunit (TrpG) of anthranilate synthase (AS) provides the glutamine amidotransferase activity which generates ammonia as a substrate that, along with chorismate, is used in the second step, catalyzed by the large alpha subunit of AS (TrpE) to produce anthranilate. In the absence of TrpG, TrpE can synthesize anthranilate directly from chorismate and high concentrations of ammonia (By similarity).</text>
</comment>
<comment type="catalytic activity">
    <reaction>
        <text>chorismate + L-glutamine = anthranilate + pyruvate + L-glutamate + H(+)</text>
        <dbReference type="Rhea" id="RHEA:21732"/>
        <dbReference type="ChEBI" id="CHEBI:15361"/>
        <dbReference type="ChEBI" id="CHEBI:15378"/>
        <dbReference type="ChEBI" id="CHEBI:16567"/>
        <dbReference type="ChEBI" id="CHEBI:29748"/>
        <dbReference type="ChEBI" id="CHEBI:29985"/>
        <dbReference type="ChEBI" id="CHEBI:58359"/>
        <dbReference type="EC" id="4.1.3.27"/>
    </reaction>
</comment>
<comment type="cofactor">
    <cofactor evidence="2">
        <name>Mg(2+)</name>
        <dbReference type="ChEBI" id="CHEBI:18420"/>
    </cofactor>
    <text evidence="2">Binds 1 Mg(2+) ion per subunit.</text>
</comment>
<comment type="activity regulation">
    <text evidence="1">Feedback inhibited by tryptophan.</text>
</comment>
<comment type="pathway">
    <text>Amino-acid biosynthesis; L-tryptophan biosynthesis; L-tryptophan from chorismate: step 1/5.</text>
</comment>
<comment type="subunit">
    <text evidence="1">Heterotetramer consisting of two non-identical subunits: a beta subunit (TrpG) and a large alpha subunit (TrpE).</text>
</comment>
<comment type="similarity">
    <text evidence="3">Belongs to the anthranilate synthase component I family.</text>
</comment>